<gene>
    <name evidence="1" type="primary">glyQ</name>
    <name type="ordered locus">SPG_1403</name>
</gene>
<organism>
    <name type="scientific">Streptococcus pneumoniae serotype 19F (strain G54)</name>
    <dbReference type="NCBI Taxonomy" id="512566"/>
    <lineage>
        <taxon>Bacteria</taxon>
        <taxon>Bacillati</taxon>
        <taxon>Bacillota</taxon>
        <taxon>Bacilli</taxon>
        <taxon>Lactobacillales</taxon>
        <taxon>Streptococcaceae</taxon>
        <taxon>Streptococcus</taxon>
    </lineage>
</organism>
<sequence>MSKKLTFQEIILTLQQFWNDQGCMLMQAYDNEKGAGTMSPYTFLRAIGPEPWNAAYVEPSRRPADGRYGENPNRLYQHHQFQVVMKPSPSNIQELYLESLEKLGINPLEHDIRFVEDNWENPSTGSAGLGWEVWLDGMEITQFTYFQQVGGLATSPVTAEVTYGLERLASYIQEVDSVYDIEWADGVKYGEIFIQPEYEHSKYSFEISDQEMLLENFDKFEKEAGRALEEGLVHPAYDYVLKCSHTFNLLDARGAVSVTERAGYIARIRNLARVVAKTFVAERKRLGYPLLDEETRAKLLAEDAE</sequence>
<reference key="1">
    <citation type="journal article" date="2001" name="Microb. Drug Resist.">
        <title>Annotated draft genomic sequence from a Streptococcus pneumoniae type 19F clinical isolate.</title>
        <authorList>
            <person name="Dopazo J."/>
            <person name="Mendoza A."/>
            <person name="Herrero J."/>
            <person name="Caldara F."/>
            <person name="Humbert Y."/>
            <person name="Friedli L."/>
            <person name="Guerrier M."/>
            <person name="Grand-Schenk E."/>
            <person name="Gandin C."/>
            <person name="de Francesco M."/>
            <person name="Polissi A."/>
            <person name="Buell G."/>
            <person name="Feger G."/>
            <person name="Garcia E."/>
            <person name="Peitsch M."/>
            <person name="Garcia-Bustos J.F."/>
        </authorList>
    </citation>
    <scope>NUCLEOTIDE SEQUENCE [LARGE SCALE GENOMIC DNA]</scope>
    <source>
        <strain>G54</strain>
    </source>
</reference>
<reference key="2">
    <citation type="submission" date="2008-03" db="EMBL/GenBank/DDBJ databases">
        <title>Pneumococcal beta glucoside metabolism investigated by whole genome comparison.</title>
        <authorList>
            <person name="Mulas L."/>
            <person name="Trappetti C."/>
            <person name="Hakenbeck R."/>
            <person name="Iannelli F."/>
            <person name="Pozzi G."/>
            <person name="Davidsen T.M."/>
            <person name="Tettelin H."/>
            <person name="Oggioni M."/>
        </authorList>
    </citation>
    <scope>NUCLEOTIDE SEQUENCE [LARGE SCALE GENOMIC DNA]</scope>
    <source>
        <strain>G54</strain>
    </source>
</reference>
<comment type="catalytic activity">
    <reaction evidence="1">
        <text>tRNA(Gly) + glycine + ATP = glycyl-tRNA(Gly) + AMP + diphosphate</text>
        <dbReference type="Rhea" id="RHEA:16013"/>
        <dbReference type="Rhea" id="RHEA-COMP:9664"/>
        <dbReference type="Rhea" id="RHEA-COMP:9683"/>
        <dbReference type="ChEBI" id="CHEBI:30616"/>
        <dbReference type="ChEBI" id="CHEBI:33019"/>
        <dbReference type="ChEBI" id="CHEBI:57305"/>
        <dbReference type="ChEBI" id="CHEBI:78442"/>
        <dbReference type="ChEBI" id="CHEBI:78522"/>
        <dbReference type="ChEBI" id="CHEBI:456215"/>
        <dbReference type="EC" id="6.1.1.14"/>
    </reaction>
</comment>
<comment type="subunit">
    <text evidence="1">Tetramer of two alpha and two beta subunits.</text>
</comment>
<comment type="subcellular location">
    <subcellularLocation>
        <location evidence="1">Cytoplasm</location>
    </subcellularLocation>
</comment>
<comment type="similarity">
    <text evidence="1">Belongs to the class-II aminoacyl-tRNA synthetase family.</text>
</comment>
<keyword id="KW-0030">Aminoacyl-tRNA synthetase</keyword>
<keyword id="KW-0067">ATP-binding</keyword>
<keyword id="KW-0963">Cytoplasm</keyword>
<keyword id="KW-0436">Ligase</keyword>
<keyword id="KW-0547">Nucleotide-binding</keyword>
<keyword id="KW-0648">Protein biosynthesis</keyword>
<proteinExistence type="inferred from homology"/>
<dbReference type="EC" id="6.1.1.14" evidence="1"/>
<dbReference type="EMBL" id="CP001015">
    <property type="protein sequence ID" value="ACF55085.1"/>
    <property type="molecule type" value="Genomic_DNA"/>
</dbReference>
<dbReference type="SMR" id="B5E643"/>
<dbReference type="KEGG" id="spx:SPG_1403"/>
<dbReference type="HOGENOM" id="CLU_057066_1_0_9"/>
<dbReference type="GO" id="GO:0005829">
    <property type="term" value="C:cytosol"/>
    <property type="evidence" value="ECO:0007669"/>
    <property type="project" value="TreeGrafter"/>
</dbReference>
<dbReference type="GO" id="GO:0005524">
    <property type="term" value="F:ATP binding"/>
    <property type="evidence" value="ECO:0007669"/>
    <property type="project" value="UniProtKB-UniRule"/>
</dbReference>
<dbReference type="GO" id="GO:0140096">
    <property type="term" value="F:catalytic activity, acting on a protein"/>
    <property type="evidence" value="ECO:0007669"/>
    <property type="project" value="UniProtKB-ARBA"/>
</dbReference>
<dbReference type="GO" id="GO:0004820">
    <property type="term" value="F:glycine-tRNA ligase activity"/>
    <property type="evidence" value="ECO:0007669"/>
    <property type="project" value="UniProtKB-UniRule"/>
</dbReference>
<dbReference type="GO" id="GO:0016740">
    <property type="term" value="F:transferase activity"/>
    <property type="evidence" value="ECO:0007669"/>
    <property type="project" value="UniProtKB-ARBA"/>
</dbReference>
<dbReference type="GO" id="GO:0006426">
    <property type="term" value="P:glycyl-tRNA aminoacylation"/>
    <property type="evidence" value="ECO:0007669"/>
    <property type="project" value="UniProtKB-UniRule"/>
</dbReference>
<dbReference type="CDD" id="cd00733">
    <property type="entry name" value="GlyRS_alpha_core"/>
    <property type="match status" value="1"/>
</dbReference>
<dbReference type="FunFam" id="3.30.930.10:FF:000006">
    <property type="entry name" value="Glycine--tRNA ligase alpha subunit"/>
    <property type="match status" value="1"/>
</dbReference>
<dbReference type="Gene3D" id="3.30.930.10">
    <property type="entry name" value="Bira Bifunctional Protein, Domain 2"/>
    <property type="match status" value="1"/>
</dbReference>
<dbReference type="Gene3D" id="1.20.58.180">
    <property type="entry name" value="Class II aaRS and biotin synthetases, domain 2"/>
    <property type="match status" value="1"/>
</dbReference>
<dbReference type="HAMAP" id="MF_00254">
    <property type="entry name" value="Gly_tRNA_synth_alpha"/>
    <property type="match status" value="1"/>
</dbReference>
<dbReference type="InterPro" id="IPR045864">
    <property type="entry name" value="aa-tRNA-synth_II/BPL/LPL"/>
</dbReference>
<dbReference type="InterPro" id="IPR006194">
    <property type="entry name" value="Gly-tRNA-synth_heterodimer"/>
</dbReference>
<dbReference type="InterPro" id="IPR002310">
    <property type="entry name" value="Gly-tRNA_ligase_asu"/>
</dbReference>
<dbReference type="NCBIfam" id="TIGR00388">
    <property type="entry name" value="glyQ"/>
    <property type="match status" value="1"/>
</dbReference>
<dbReference type="NCBIfam" id="NF006827">
    <property type="entry name" value="PRK09348.1"/>
    <property type="match status" value="1"/>
</dbReference>
<dbReference type="PANTHER" id="PTHR30075:SF2">
    <property type="entry name" value="GLYCINE--TRNA LIGASE, CHLOROPLASTIC_MITOCHONDRIAL 2"/>
    <property type="match status" value="1"/>
</dbReference>
<dbReference type="PANTHER" id="PTHR30075">
    <property type="entry name" value="GLYCYL-TRNA SYNTHETASE"/>
    <property type="match status" value="1"/>
</dbReference>
<dbReference type="Pfam" id="PF02091">
    <property type="entry name" value="tRNA-synt_2e"/>
    <property type="match status" value="1"/>
</dbReference>
<dbReference type="PRINTS" id="PR01044">
    <property type="entry name" value="TRNASYNTHGA"/>
</dbReference>
<dbReference type="SUPFAM" id="SSF55681">
    <property type="entry name" value="Class II aaRS and biotin synthetases"/>
    <property type="match status" value="1"/>
</dbReference>
<dbReference type="PROSITE" id="PS50861">
    <property type="entry name" value="AA_TRNA_LIGASE_II_GLYAB"/>
    <property type="match status" value="1"/>
</dbReference>
<evidence type="ECO:0000255" key="1">
    <source>
        <dbReference type="HAMAP-Rule" id="MF_00254"/>
    </source>
</evidence>
<protein>
    <recommendedName>
        <fullName evidence="1">Glycine--tRNA ligase alpha subunit</fullName>
        <ecNumber evidence="1">6.1.1.14</ecNumber>
    </recommendedName>
    <alternativeName>
        <fullName evidence="1">Glycyl-tRNA synthetase alpha subunit</fullName>
        <shortName evidence="1">GlyRS</shortName>
    </alternativeName>
</protein>
<name>SYGA_STRP4</name>
<accession>B5E643</accession>
<feature type="chain" id="PRO_1000101236" description="Glycine--tRNA ligase alpha subunit">
    <location>
        <begin position="1"/>
        <end position="305"/>
    </location>
</feature>